<protein>
    <recommendedName>
        <fullName>Protein U25</fullName>
    </recommendedName>
</protein>
<reference key="1">
    <citation type="journal article" date="1996" name="J. Virol.">
        <title>Determination and analysis of the complete nucleotide sequence of human herpesvirus.</title>
        <authorList>
            <person name="Nicholas J."/>
        </authorList>
    </citation>
    <scope>NUCLEOTIDE SEQUENCE [LARGE SCALE GENOMIC DNA]</scope>
</reference>
<organism>
    <name type="scientific">Human herpesvirus 7 (strain JI)</name>
    <name type="common">HHV-7</name>
    <name type="synonym">Human T lymphotropic virus</name>
    <dbReference type="NCBI Taxonomy" id="57278"/>
    <lineage>
        <taxon>Viruses</taxon>
        <taxon>Duplodnaviria</taxon>
        <taxon>Heunggongvirae</taxon>
        <taxon>Peploviricota</taxon>
        <taxon>Herviviricetes</taxon>
        <taxon>Herpesvirales</taxon>
        <taxon>Orthoherpesviridae</taxon>
        <taxon>Betaherpesvirinae</taxon>
        <taxon>Roseolovirus</taxon>
        <taxon>Roseolovirus humanbeta7</taxon>
        <taxon>Human betaherpesvirus 7</taxon>
    </lineage>
</organism>
<accession>P52528</accession>
<keyword id="KW-1185">Reference proteome</keyword>
<name>VU25_HHV7J</name>
<sequence length="320" mass="37883">MDFLANLCCVNKLTLLEEFILSKEGTSFVLPFPEEWRVTFHSLETIPEISKEDIEEIRNTYLCCEKTLIVVGVLHHVKKSTCRGPILLQGDRGHLYVYNGFFDKSLYYVSSNLQDFFLVGLKFFYPIYELCDFIVDFETGSKIVEHSKSFSDMIIYRDENINVCFILKSSPYKTYTRFCRLPMTPYTDQDLHRWKRVIRCNIVDVLFCVKHNVFGKWFELVIIFDVNGKIFGVDDEQIIFLAHNITEFLKIGCLRFNENRRLHGYWFERTNDVRNVEEELSRQINCPWGNTCKRKKRNIFKQPLLWKSVGRKNNSAHNVL</sequence>
<proteinExistence type="inferred from homology"/>
<evidence type="ECO:0000305" key="1"/>
<feature type="chain" id="PRO_0000116322" description="Protein U25">
    <location>
        <begin position="1"/>
        <end position="320"/>
    </location>
</feature>
<dbReference type="EMBL" id="U43400">
    <property type="protein sequence ID" value="AAC54687.1"/>
    <property type="molecule type" value="Genomic_DNA"/>
</dbReference>
<dbReference type="PIR" id="T41927">
    <property type="entry name" value="T41927"/>
</dbReference>
<dbReference type="RefSeq" id="YP_073765.1">
    <property type="nucleotide sequence ID" value="NC_001716.2"/>
</dbReference>
<dbReference type="DNASU" id="3289483"/>
<dbReference type="GeneID" id="3289483"/>
<dbReference type="KEGG" id="vg:3289483"/>
<dbReference type="Proteomes" id="UP000009246">
    <property type="component" value="Segment"/>
</dbReference>
<dbReference type="InterPro" id="IPR003360">
    <property type="entry name" value="US22-like"/>
</dbReference>
<dbReference type="Pfam" id="PF02393">
    <property type="entry name" value="US22"/>
    <property type="match status" value="2"/>
</dbReference>
<comment type="similarity">
    <text evidence="1">Belongs to the herpesviridae US22 family.</text>
</comment>
<gene>
    <name type="primary">U25</name>
</gene>
<organismHost>
    <name type="scientific">Homo sapiens</name>
    <name type="common">Human</name>
    <dbReference type="NCBI Taxonomy" id="9606"/>
</organismHost>